<proteinExistence type="evidence at protein level"/>
<feature type="signal peptide" evidence="3">
    <location>
        <begin position="1"/>
        <end position="24"/>
    </location>
</feature>
<feature type="chain" id="PRO_0000419255" description="Cytochrome c-554" evidence="3">
    <location>
        <begin position="25"/>
        <end position="132"/>
    </location>
</feature>
<feature type="domain" description="Cytochrome c" evidence="2">
    <location>
        <begin position="26"/>
        <end position="126"/>
    </location>
</feature>
<feature type="binding site" description="covalent" evidence="1 2">
    <location>
        <position position="38"/>
    </location>
    <ligand>
        <name>heme c</name>
        <dbReference type="ChEBI" id="CHEBI:61717"/>
    </ligand>
</feature>
<feature type="binding site" description="covalent" evidence="1 2">
    <location>
        <position position="41"/>
    </location>
    <ligand>
        <name>heme c</name>
        <dbReference type="ChEBI" id="CHEBI:61717"/>
    </ligand>
</feature>
<feature type="binding site" description="axial binding residue" evidence="1 2">
    <location>
        <position position="42"/>
    </location>
    <ligand>
        <name>heme c</name>
        <dbReference type="ChEBI" id="CHEBI:61717"/>
    </ligand>
    <ligandPart>
        <name>Fe</name>
        <dbReference type="ChEBI" id="CHEBI:18248"/>
    </ligandPart>
</feature>
<feature type="binding site" description="axial binding residue" evidence="1 2">
    <location>
        <position position="104"/>
    </location>
    <ligand>
        <name>heme c</name>
        <dbReference type="ChEBI" id="CHEBI:61717"/>
    </ligand>
    <ligandPart>
        <name>Fe</name>
        <dbReference type="ChEBI" id="CHEBI:18248"/>
    </ligandPart>
</feature>
<sequence length="132" mass="13932">MKSISMLTLAASVAFAVTAGQAVAAGDPAAGEKVFNKCKACHQVGETAKNAVAPELNGIDGRKSASAEGYNYSEPFKALGITWDEAQFKEFIKNPKAKVPGTKMIFPGLSSENDQANVWAYLSQFGADGKKK</sequence>
<comment type="subcellular location">
    <subcellularLocation>
        <location evidence="4">Periplasm</location>
    </subcellularLocation>
</comment>
<comment type="PTM">
    <text evidence="3">Binds 1 heme c group covalently per subunit.</text>
</comment>
<comment type="mass spectrometry" mass="12230.0" error="15.0" method="MALDI" evidence="3"/>
<reference evidence="6" key="1">
    <citation type="journal article" date="2010" name="J. Bacteriol.">
        <title>Genome sequence of the obligate methanotroph Methylosinus trichosporium strain OB3b.</title>
        <authorList>
            <person name="Stein L.Y."/>
            <person name="Yoon S."/>
            <person name="Semrau J.D."/>
            <person name="Dispirito A.A."/>
            <person name="Murrell J.C."/>
            <person name="Vuilleumier S."/>
            <person name="Kalyuzhnaya M.G."/>
            <person name="Op den Camp H.J."/>
            <person name="Bringel F."/>
            <person name="Bruce D."/>
            <person name="Cheng J.F."/>
            <person name="Copeland A."/>
            <person name="Goodwin L."/>
            <person name="Han S."/>
            <person name="Hauser L."/>
            <person name="Jetten M.S."/>
            <person name="Lajus A."/>
            <person name="Land M.L."/>
            <person name="Lapidus A."/>
            <person name="Lucas S."/>
            <person name="Medigue C."/>
            <person name="Pitluck S."/>
            <person name="Woyke T."/>
            <person name="Zeytun A."/>
            <person name="Klotz M.G."/>
        </authorList>
    </citation>
    <scope>NUCLEOTIDE SEQUENCE [LARGE SCALE GENOMIC DNA]</scope>
    <source>
        <strain evidence="6">ATCC 35070 / NCIMB 11131 / ACM 3311 / OB3b</strain>
    </source>
</reference>
<reference evidence="5" key="2">
    <citation type="journal article" date="2011" name="PLoS ONE">
        <title>Cytochrome c-554 from Methylosinus trichosporium OB3b; a protein that belongs to the cytochrome c2 family and exhibits a HALS-Type EPR signal.</title>
        <authorList>
            <person name="Harbitz E."/>
            <person name="Andersson K.K."/>
        </authorList>
    </citation>
    <scope>PROTEIN SEQUENCE OF 25-63 AND 104-132</scope>
    <scope>SUBCELLULAR LOCATION</scope>
    <scope>PTM</scope>
    <scope>MASS SPECTROMETRY</scope>
    <source>
        <strain evidence="3">ATCC 35070 / NCIMB 11131 / ACM 3311 / OB3b</strain>
    </source>
</reference>
<gene>
    <name type="ORF">MettrDRAFT_3796</name>
</gene>
<organism>
    <name type="scientific">Methylosinus trichosporium</name>
    <dbReference type="NCBI Taxonomy" id="426"/>
    <lineage>
        <taxon>Bacteria</taxon>
        <taxon>Pseudomonadati</taxon>
        <taxon>Pseudomonadota</taxon>
        <taxon>Alphaproteobacteria</taxon>
        <taxon>Hyphomicrobiales</taxon>
        <taxon>Methylocystaceae</taxon>
        <taxon>Methylosinus</taxon>
    </lineage>
</organism>
<evidence type="ECO:0000250" key="1">
    <source>
        <dbReference type="UniProtKB" id="P00085"/>
    </source>
</evidence>
<evidence type="ECO:0000255" key="2">
    <source>
        <dbReference type="PROSITE-ProRule" id="PRU00433"/>
    </source>
</evidence>
<evidence type="ECO:0000269" key="3">
    <source>
    </source>
</evidence>
<evidence type="ECO:0000303" key="4">
    <source>
    </source>
</evidence>
<evidence type="ECO:0000305" key="5"/>
<evidence type="ECO:0000312" key="6">
    <source>
        <dbReference type="EMBL" id="EFH01442.1"/>
    </source>
</evidence>
<name>C554_METTR</name>
<keyword id="KW-0903">Direct protein sequencing</keyword>
<keyword id="KW-0249">Electron transport</keyword>
<keyword id="KW-0349">Heme</keyword>
<keyword id="KW-0408">Iron</keyword>
<keyword id="KW-0479">Metal-binding</keyword>
<keyword id="KW-0574">Periplasm</keyword>
<keyword id="KW-0732">Signal</keyword>
<keyword id="KW-0813">Transport</keyword>
<protein>
    <recommendedName>
        <fullName evidence="4">Cytochrome c-554</fullName>
    </recommendedName>
    <alternativeName>
        <fullName evidence="6">Cytochrome c class I</fullName>
    </alternativeName>
</protein>
<accession>D5QVH0</accession>
<dbReference type="EMBL" id="ADVE01000068">
    <property type="protein sequence ID" value="EFH01442.1"/>
    <property type="molecule type" value="Genomic_DNA"/>
</dbReference>
<dbReference type="SMR" id="D5QVH0"/>
<dbReference type="GO" id="GO:0042597">
    <property type="term" value="C:periplasmic space"/>
    <property type="evidence" value="ECO:0007669"/>
    <property type="project" value="UniProtKB-SubCell"/>
</dbReference>
<dbReference type="GO" id="GO:0009055">
    <property type="term" value="F:electron transfer activity"/>
    <property type="evidence" value="ECO:0007669"/>
    <property type="project" value="InterPro"/>
</dbReference>
<dbReference type="GO" id="GO:0020037">
    <property type="term" value="F:heme binding"/>
    <property type="evidence" value="ECO:0007669"/>
    <property type="project" value="InterPro"/>
</dbReference>
<dbReference type="GO" id="GO:0046872">
    <property type="term" value="F:metal ion binding"/>
    <property type="evidence" value="ECO:0007669"/>
    <property type="project" value="UniProtKB-KW"/>
</dbReference>
<dbReference type="Gene3D" id="1.10.760.10">
    <property type="entry name" value="Cytochrome c-like domain"/>
    <property type="match status" value="1"/>
</dbReference>
<dbReference type="InterPro" id="IPR009056">
    <property type="entry name" value="Cyt_c-like_dom"/>
</dbReference>
<dbReference type="InterPro" id="IPR036909">
    <property type="entry name" value="Cyt_c-like_dom_sf"/>
</dbReference>
<dbReference type="InterPro" id="IPR002327">
    <property type="entry name" value="Cyt_c_1A/1B"/>
</dbReference>
<dbReference type="PANTHER" id="PTHR11961">
    <property type="entry name" value="CYTOCHROME C"/>
    <property type="match status" value="1"/>
</dbReference>
<dbReference type="Pfam" id="PF00034">
    <property type="entry name" value="Cytochrom_C"/>
    <property type="match status" value="1"/>
</dbReference>
<dbReference type="PRINTS" id="PR00604">
    <property type="entry name" value="CYTCHRMECIAB"/>
</dbReference>
<dbReference type="SUPFAM" id="SSF46626">
    <property type="entry name" value="Cytochrome c"/>
    <property type="match status" value="1"/>
</dbReference>
<dbReference type="PROSITE" id="PS51007">
    <property type="entry name" value="CYTC"/>
    <property type="match status" value="1"/>
</dbReference>